<feature type="chain" id="PRO_0000437313" description="Aspartate kinase FUB3">
    <location>
        <begin position="1"/>
        <end position="510"/>
    </location>
</feature>
<feature type="domain" description="ACT 1" evidence="2">
    <location>
        <begin position="372"/>
        <end position="440"/>
    </location>
</feature>
<feature type="domain" description="ACT 2" evidence="2">
    <location>
        <begin position="446"/>
        <end position="510"/>
    </location>
</feature>
<gene>
    <name evidence="13" type="primary">FUB3</name>
    <name type="ORF">FVEG_12521</name>
</gene>
<name>FUB3_GIBM7</name>
<protein>
    <recommendedName>
        <fullName evidence="13">Aspartate kinase FUB3</fullName>
        <ecNumber evidence="16">2.7.2.4</ecNumber>
    </recommendedName>
    <alternativeName>
        <fullName evidence="13">Fusaric acid biosynthesis protein 3</fullName>
    </alternativeName>
</protein>
<sequence>MRSRRDNSWVVQKFGGTSIGKFPDKVAEIVKSARLGGDRPAVICSARSSGKKVFGTTSRLLQVYRTLRGIVAITQDPDMQELLFDRLRSIIKDIRDDQVATVQIYILRQDIRDETTRQITADCQELLDYTSAAKRFNLDINGKAKDKMVSFGEKLSCRLMVAMLRDRDIPAEYVDLSDIVPNNNLNHLKPEFFPEAAAVFGKRIEACNGRVPVITGFFGAVPGSLIDSGIGRGYSDLCAVLVAIGLHAERVQIWKEVDGIFTADPREVPDARCLPSITPSEAAELTFYGSEVIHHLALSLAIQAKPPISIFVKNVQKPWGQGTVVVPSDGDDTSSWPIDYLDPSDSDCTSSTALPKMPTAVTIKRDITILNILSNKQSMSHGFFVKVFTILAEHDISVDLISTSEVHVSMAINSSNMDPSQIKDVHCKIAEEGEVNVLPDMAILSLVGAELKNMTGIAGRMFAILGEQHVNIEMISQGASEINISCVIPDKDATRALNMLHNELFTKNAM</sequence>
<comment type="function">
    <text evidence="1 7 12">Aspartate kinase; part of the gene cluster that mediates the biosynthesis of fusaric acid, a mycotoxin with low to moderate toxicity to animals and humans, but with high phytotoxic properties (PubMed:22652150, PubMed:25372119). L-aspartate is suggested as fusaric acid amino acid precursor that is activated and further processed to O-acetyl-L-homoserine by cluster enzymes aspartate kinase FUB3 and homoserine O-acetyltransferase FUB5, as well as enzymes of the primary metabolism (By similarity). The polyketide synthase (PKS) FUB1 generates the triketide trans-2-hexenal which is presumptively released by the hydrolase FUB4 and linked to the NRPS-bound amino acid precursor by NAD(P)-dependent dehydrogenase FUB6 (By similarity). FUB1, FUB4, and the non-canonical NRPS Fub8 may form an enzyme complex (By similarity). Further processing of the NRPS-bound intermediate might be carried out by FUB6 and the sulfhydrylase FUB7, enabling a spontaneous electrocyclization to close the carbon backbone of fusaric acid (By similarity). Dihydrofusaric acid is likely to be released via reduction by the thioester reductase (TR) domain of FUB8 whereupon the final oxidation to fusaric acid may (also) be performed by the FMN-dependent dehydrogenase FUB9 (By similarity).</text>
</comment>
<comment type="catalytic activity">
    <reaction evidence="15">
        <text>L-aspartate + ATP = 4-phospho-L-aspartate + ADP</text>
        <dbReference type="Rhea" id="RHEA:23776"/>
        <dbReference type="ChEBI" id="CHEBI:29991"/>
        <dbReference type="ChEBI" id="CHEBI:30616"/>
        <dbReference type="ChEBI" id="CHEBI:57535"/>
        <dbReference type="ChEBI" id="CHEBI:456216"/>
        <dbReference type="EC" id="2.7.2.4"/>
    </reaction>
</comment>
<comment type="pathway">
    <text evidence="7 12">Mycotoxin biosynthesis.</text>
</comment>
<comment type="induction">
    <text evidence="8 12">Expression is positively regulated by the fusaric acid cluster specific transcription factor FUB10 (PubMed:25372119). Expression is also positively regulated by the secondary metabolism regulator LAE1 (PubMed:22713715).</text>
</comment>
<comment type="disruption phenotype">
    <text evidence="12">Strongly reduces production of fusaric acid (PubMed:25372119).</text>
</comment>
<comment type="biotechnology">
    <text evidence="3 4 5 6 9 10 11">Fusaric acid is phytotoxic to plants such as cotton and banana (PubMed:20955724, PubMed:23922960). It has been shown to induce programmed cell death in plants (PubMed:16868776, PubMed:23838885). In addition to a mild toxicity to animals, fusaric acid exhibits acanthamoebicidal, antioomycete, and antimycobacterial activities (PubMed:17927749, PubMed:21811925, PubMed:22864988).</text>
</comment>
<comment type="similarity">
    <text evidence="14">Belongs to the aspartokinase family.</text>
</comment>
<comment type="sequence caution" evidence="14">
    <conflict type="erroneous initiation">
        <sequence resource="EMBL-CDS" id="EWG54262"/>
    </conflict>
    <text>Extended N-terminus.</text>
</comment>
<reference key="1">
    <citation type="journal article" date="2010" name="Nature">
        <title>Comparative genomics reveals mobile pathogenicity chromosomes in Fusarium.</title>
        <authorList>
            <person name="Ma L.-J."/>
            <person name="van der Does H.C."/>
            <person name="Borkovich K.A."/>
            <person name="Coleman J.J."/>
            <person name="Daboussi M.-J."/>
            <person name="Di Pietro A."/>
            <person name="Dufresne M."/>
            <person name="Freitag M."/>
            <person name="Grabherr M."/>
            <person name="Henrissat B."/>
            <person name="Houterman P.M."/>
            <person name="Kang S."/>
            <person name="Shim W.-B."/>
            <person name="Woloshuk C."/>
            <person name="Xie X."/>
            <person name="Xu J.-R."/>
            <person name="Antoniw J."/>
            <person name="Baker S.E."/>
            <person name="Bluhm B.H."/>
            <person name="Breakspear A."/>
            <person name="Brown D.W."/>
            <person name="Butchko R.A.E."/>
            <person name="Chapman S."/>
            <person name="Coulson R."/>
            <person name="Coutinho P.M."/>
            <person name="Danchin E.G.J."/>
            <person name="Diener A."/>
            <person name="Gale L.R."/>
            <person name="Gardiner D.M."/>
            <person name="Goff S."/>
            <person name="Hammond-Kosack K.E."/>
            <person name="Hilburn K."/>
            <person name="Hua-Van A."/>
            <person name="Jonkers W."/>
            <person name="Kazan K."/>
            <person name="Kodira C.D."/>
            <person name="Koehrsen M."/>
            <person name="Kumar L."/>
            <person name="Lee Y.-H."/>
            <person name="Li L."/>
            <person name="Manners J.M."/>
            <person name="Miranda-Saavedra D."/>
            <person name="Mukherjee M."/>
            <person name="Park G."/>
            <person name="Park J."/>
            <person name="Park S.-Y."/>
            <person name="Proctor R.H."/>
            <person name="Regev A."/>
            <person name="Ruiz-Roldan M.C."/>
            <person name="Sain D."/>
            <person name="Sakthikumar S."/>
            <person name="Sykes S."/>
            <person name="Schwartz D.C."/>
            <person name="Turgeon B.G."/>
            <person name="Wapinski I."/>
            <person name="Yoder O."/>
            <person name="Young S."/>
            <person name="Zeng Q."/>
            <person name="Zhou S."/>
            <person name="Galagan J."/>
            <person name="Cuomo C.A."/>
            <person name="Kistler H.C."/>
            <person name="Rep M."/>
        </authorList>
    </citation>
    <scope>NUCLEOTIDE SEQUENCE [LARGE SCALE GENOMIC DNA]</scope>
    <source>
        <strain>M3125 / FGSC 7600</strain>
    </source>
</reference>
<reference key="2">
    <citation type="journal article" date="2006" name="Planta">
        <title>Fusaric acid induces apoptosis in saffron root-tip cells: roles of caspase-like activity, cytochrome c, and H2O2.</title>
        <authorList>
            <person name="Samadi L."/>
            <person name="Shahsavan Behboodi B."/>
        </authorList>
    </citation>
    <scope>BIOTECHNOLOGY</scope>
</reference>
<reference key="3">
    <citation type="journal article" date="2008" name="J. Appl. Microbiol.">
        <title>Bikaverin and fusaric acid from Fusarium oxysporum show antioomycete activity against Phytophthora infestans.</title>
        <authorList>
            <person name="Son S.W."/>
            <person name="Kim H.Y."/>
            <person name="Choi G.J."/>
            <person name="Lim H.K."/>
            <person name="Jang K.S."/>
            <person name="Lee S.O."/>
            <person name="Lee S."/>
            <person name="Sung N.D."/>
            <person name="Kim J.C."/>
        </authorList>
    </citation>
    <scope>BIOTECHNOLOGY</scope>
</reference>
<reference key="4">
    <citation type="journal article" date="2011" name="Arch. Pharm. Res.">
        <title>Antimycobacterial activity of fusaric acid from a mangrove endophyte and its metal complexes.</title>
        <authorList>
            <person name="Pan J.H."/>
            <person name="Chen Y."/>
            <person name="Huang Y.H."/>
            <person name="Tao Y.W."/>
            <person name="Wang J."/>
            <person name="Li Y."/>
            <person name="Peng Y."/>
            <person name="Dong T."/>
            <person name="Lai X.M."/>
            <person name="Lin Y.C."/>
        </authorList>
    </citation>
    <scope>BIOTECHNOLOGY</scope>
</reference>
<reference key="5">
    <citation type="journal article" date="2011" name="Toxicon">
        <title>Phytotoxicity of fusaric acid and analogs to cotton.</title>
        <authorList>
            <person name="Stipanovic R.D."/>
            <person name="Puckhaber L.S."/>
            <person name="Liu J."/>
            <person name="Bell A.A."/>
        </authorList>
    </citation>
    <scope>BIOTECHNOLOGY</scope>
</reference>
<reference key="6">
    <citation type="journal article" date="2012" name="Fungal Genet. Biol.">
        <title>Identification of gene clusters associated with fusaric acid, fusarin, and perithecial pigment production in Fusarium verticillioides.</title>
        <authorList>
            <person name="Brown D.W."/>
            <person name="Butchko R.A."/>
            <person name="Busman M."/>
            <person name="Proctor R.H."/>
        </authorList>
    </citation>
    <scope>FUNCTION</scope>
</reference>
<reference key="7">
    <citation type="journal article" date="2012" name="Fungal Genet. Biol.">
        <title>Lae1 regulates expression of multiple secondary metabolite gene clusters in Fusarium verticillioides.</title>
        <authorList>
            <person name="Butchko R.A."/>
            <person name="Brown D.W."/>
            <person name="Busman M."/>
            <person name="Tudzynski B."/>
            <person name="Wiemann P."/>
        </authorList>
    </citation>
    <scope>INDUCTION</scope>
</reference>
<reference key="8">
    <citation type="journal article" date="2012" name="Planta Med.">
        <title>In vitro acanthamoebicidal activity of fusaric acid and dehydrofusaric acid from an endophytic fungus Fusarium sp. Tlau3.</title>
        <authorList>
            <person name="Boonman N."/>
            <person name="Prachya S."/>
            <person name="Boonmee A."/>
            <person name="Kittakoop P."/>
            <person name="Wiyakrutta S."/>
            <person name="Sriubolmas N."/>
            <person name="Warit S."/>
            <person name="Dharmkrong-At Chusattayanond A."/>
        </authorList>
    </citation>
    <scope>BIOTECHNOLOGY</scope>
</reference>
<reference key="9">
    <citation type="journal article" date="2013" name="Planta">
        <title>Fusaric acid induction of programmed cell death modulated through nitric oxide signalling in tobacco suspension cells.</title>
        <authorList>
            <person name="Jiao J."/>
            <person name="Zhou B."/>
            <person name="Zhu X."/>
            <person name="Gao Z."/>
            <person name="Liang Y."/>
        </authorList>
    </citation>
    <scope>BIOTECHNOLOGY</scope>
</reference>
<reference key="10">
    <citation type="journal article" date="2013" name="PLoS ONE">
        <title>Contamination of bananas with beauvericin and fusaric acid produced by Fusarium oxysporum f. sp. cubense.</title>
        <authorList>
            <person name="Li C."/>
            <person name="Zuo C."/>
            <person name="Deng G."/>
            <person name="Kuang R."/>
            <person name="Yang Q."/>
            <person name="Hu C."/>
            <person name="Sheng O."/>
            <person name="Zhang S."/>
            <person name="Ma L."/>
            <person name="Wei Y."/>
            <person name="Yang J."/>
            <person name="Liu S."/>
            <person name="Biswas M.K."/>
            <person name="Viljoen A."/>
            <person name="Yi G."/>
        </authorList>
    </citation>
    <scope>BIOTECHNOLOGY</scope>
</reference>
<reference key="11">
    <citation type="journal article" date="2015" name="Mol. Plant Microbe Interact.">
        <title>Identification of a 12-gene fusaric acid biosynthetic gene cluster in Fusarium species through comparative and functional genomics.</title>
        <authorList>
            <person name="Brown D.W."/>
            <person name="Lee S.H."/>
            <person name="Kim L.H."/>
            <person name="Ryu J.G."/>
            <person name="Lee S."/>
            <person name="Seo Y."/>
            <person name="Kim Y.H."/>
            <person name="Busman M."/>
            <person name="Yun S.H."/>
            <person name="Proctor R.H."/>
            <person name="Lee T."/>
        </authorList>
    </citation>
    <scope>FUNCTION</scope>
    <scope>DISRUPTION PHENOTYPE</scope>
    <scope>INDUCTION</scope>
    <scope>CATALYTIC ACTIVITY</scope>
</reference>
<dbReference type="EC" id="2.7.2.4" evidence="16"/>
<dbReference type="EMBL" id="CM000580">
    <property type="protein sequence ID" value="EWG54262.1"/>
    <property type="status" value="ALT_INIT"/>
    <property type="molecule type" value="Genomic_DNA"/>
</dbReference>
<dbReference type="EMBL" id="CM000580">
    <property type="protein sequence ID" value="EWG54263.1"/>
    <property type="molecule type" value="Genomic_DNA"/>
</dbReference>
<dbReference type="RefSeq" id="XP_018760453.1">
    <property type="nucleotide sequence ID" value="XM_018901861.1"/>
</dbReference>
<dbReference type="RefSeq" id="XP_018760454.1">
    <property type="nucleotide sequence ID" value="XM_018901862.1"/>
</dbReference>
<dbReference type="SMR" id="W7MS01"/>
<dbReference type="STRING" id="334819.W7MS01"/>
<dbReference type="EnsemblFungi" id="FVEG_12521T0">
    <property type="protein sequence ID" value="FVEG_12521T0"/>
    <property type="gene ID" value="FVEG_12521"/>
</dbReference>
<dbReference type="GeneID" id="30069955"/>
<dbReference type="KEGG" id="fvr:FVEG_12521"/>
<dbReference type="VEuPathDB" id="FungiDB:FVEG_12521"/>
<dbReference type="eggNOG" id="KOG0456">
    <property type="taxonomic scope" value="Eukaryota"/>
</dbReference>
<dbReference type="HOGENOM" id="CLU_009116_6_4_1"/>
<dbReference type="OMA" id="QSIHEGN"/>
<dbReference type="OrthoDB" id="58550at110618"/>
<dbReference type="PHI-base" id="PHI:3389"/>
<dbReference type="Proteomes" id="UP000009096">
    <property type="component" value="Chromosome 3"/>
</dbReference>
<dbReference type="GO" id="GO:0005829">
    <property type="term" value="C:cytosol"/>
    <property type="evidence" value="ECO:0007669"/>
    <property type="project" value="TreeGrafter"/>
</dbReference>
<dbReference type="GO" id="GO:0004072">
    <property type="term" value="F:aspartate kinase activity"/>
    <property type="evidence" value="ECO:0007669"/>
    <property type="project" value="UniProtKB-EC"/>
</dbReference>
<dbReference type="GO" id="GO:0005524">
    <property type="term" value="F:ATP binding"/>
    <property type="evidence" value="ECO:0007669"/>
    <property type="project" value="UniProtKB-KW"/>
</dbReference>
<dbReference type="GO" id="GO:0009090">
    <property type="term" value="P:homoserine biosynthetic process"/>
    <property type="evidence" value="ECO:0007669"/>
    <property type="project" value="TreeGrafter"/>
</dbReference>
<dbReference type="GO" id="GO:0009089">
    <property type="term" value="P:lysine biosynthetic process via diaminopimelate"/>
    <property type="evidence" value="ECO:0007669"/>
    <property type="project" value="InterPro"/>
</dbReference>
<dbReference type="FunFam" id="3.30.2130.10:FF:000001">
    <property type="entry name" value="Bifunctional aspartokinase/homoserine dehydrogenase"/>
    <property type="match status" value="1"/>
</dbReference>
<dbReference type="FunFam" id="3.40.1160.10:FF:000023">
    <property type="entry name" value="Probable aspartokinase"/>
    <property type="match status" value="1"/>
</dbReference>
<dbReference type="Gene3D" id="3.40.1160.10">
    <property type="entry name" value="Acetylglutamate kinase-like"/>
    <property type="match status" value="1"/>
</dbReference>
<dbReference type="Gene3D" id="3.30.2130.10">
    <property type="entry name" value="VC0802-like"/>
    <property type="match status" value="1"/>
</dbReference>
<dbReference type="InterPro" id="IPR036393">
    <property type="entry name" value="AceGlu_kinase-like_sf"/>
</dbReference>
<dbReference type="InterPro" id="IPR045865">
    <property type="entry name" value="ACT-like_dom_sf"/>
</dbReference>
<dbReference type="InterPro" id="IPR054352">
    <property type="entry name" value="ACT_Aspartokinase"/>
</dbReference>
<dbReference type="InterPro" id="IPR002912">
    <property type="entry name" value="ACT_dom"/>
</dbReference>
<dbReference type="InterPro" id="IPR001048">
    <property type="entry name" value="Asp/Glu/Uridylate_kinase"/>
</dbReference>
<dbReference type="InterPro" id="IPR005260">
    <property type="entry name" value="Asp_kin_monofn"/>
</dbReference>
<dbReference type="InterPro" id="IPR001341">
    <property type="entry name" value="Asp_kinase"/>
</dbReference>
<dbReference type="InterPro" id="IPR018042">
    <property type="entry name" value="Aspartate_kinase_CS"/>
</dbReference>
<dbReference type="NCBIfam" id="TIGR00657">
    <property type="entry name" value="asp_kinases"/>
    <property type="match status" value="1"/>
</dbReference>
<dbReference type="PANTHER" id="PTHR21499">
    <property type="entry name" value="ASPARTATE KINASE"/>
    <property type="match status" value="1"/>
</dbReference>
<dbReference type="PANTHER" id="PTHR21499:SF59">
    <property type="entry name" value="ASPARTOKINASE"/>
    <property type="match status" value="1"/>
</dbReference>
<dbReference type="Pfam" id="PF00696">
    <property type="entry name" value="AA_kinase"/>
    <property type="match status" value="1"/>
</dbReference>
<dbReference type="Pfam" id="PF22468">
    <property type="entry name" value="ACT_9"/>
    <property type="match status" value="1"/>
</dbReference>
<dbReference type="PIRSF" id="PIRSF000726">
    <property type="entry name" value="Asp_kin"/>
    <property type="match status" value="1"/>
</dbReference>
<dbReference type="SUPFAM" id="SSF55021">
    <property type="entry name" value="ACT-like"/>
    <property type="match status" value="2"/>
</dbReference>
<dbReference type="SUPFAM" id="SSF53633">
    <property type="entry name" value="Carbamate kinase-like"/>
    <property type="match status" value="1"/>
</dbReference>
<dbReference type="PROSITE" id="PS51671">
    <property type="entry name" value="ACT"/>
    <property type="match status" value="2"/>
</dbReference>
<dbReference type="PROSITE" id="PS00324">
    <property type="entry name" value="ASPARTOKINASE"/>
    <property type="match status" value="1"/>
</dbReference>
<evidence type="ECO:0000250" key="1">
    <source>
        <dbReference type="UniProtKB" id="S0DVT6"/>
    </source>
</evidence>
<evidence type="ECO:0000255" key="2">
    <source>
        <dbReference type="PROSITE-ProRule" id="PRU01007"/>
    </source>
</evidence>
<evidence type="ECO:0000269" key="3">
    <source>
    </source>
</evidence>
<evidence type="ECO:0000269" key="4">
    <source>
    </source>
</evidence>
<evidence type="ECO:0000269" key="5">
    <source>
    </source>
</evidence>
<evidence type="ECO:0000269" key="6">
    <source>
    </source>
</evidence>
<evidence type="ECO:0000269" key="7">
    <source>
    </source>
</evidence>
<evidence type="ECO:0000269" key="8">
    <source>
    </source>
</evidence>
<evidence type="ECO:0000269" key="9">
    <source>
    </source>
</evidence>
<evidence type="ECO:0000269" key="10">
    <source>
    </source>
</evidence>
<evidence type="ECO:0000269" key="11">
    <source>
    </source>
</evidence>
<evidence type="ECO:0000269" key="12">
    <source>
    </source>
</evidence>
<evidence type="ECO:0000303" key="13">
    <source>
    </source>
</evidence>
<evidence type="ECO:0000305" key="14"/>
<evidence type="ECO:0000305" key="15">
    <source>
    </source>
</evidence>
<evidence type="ECO:0000305" key="16">
    <source>
    </source>
</evidence>
<proteinExistence type="evidence at protein level"/>
<organism>
    <name type="scientific">Gibberella moniliformis (strain M3125 / FGSC 7600)</name>
    <name type="common">Maize ear and stalk rot fungus</name>
    <name type="synonym">Fusarium verticillioides</name>
    <dbReference type="NCBI Taxonomy" id="334819"/>
    <lineage>
        <taxon>Eukaryota</taxon>
        <taxon>Fungi</taxon>
        <taxon>Dikarya</taxon>
        <taxon>Ascomycota</taxon>
        <taxon>Pezizomycotina</taxon>
        <taxon>Sordariomycetes</taxon>
        <taxon>Hypocreomycetidae</taxon>
        <taxon>Hypocreales</taxon>
        <taxon>Nectriaceae</taxon>
        <taxon>Fusarium</taxon>
        <taxon>Fusarium fujikuroi species complex</taxon>
    </lineage>
</organism>
<accession>W7MS01</accession>
<accession>W7NCM9</accession>
<keyword id="KW-0067">ATP-binding</keyword>
<keyword id="KW-0418">Kinase</keyword>
<keyword id="KW-0547">Nucleotide-binding</keyword>
<keyword id="KW-0597">Phosphoprotein</keyword>
<keyword id="KW-1185">Reference proteome</keyword>
<keyword id="KW-0677">Repeat</keyword>
<keyword id="KW-0808">Transferase</keyword>